<dbReference type="EMBL" id="CP000143">
    <property type="protein sequence ID" value="ABA80356.1"/>
    <property type="molecule type" value="Genomic_DNA"/>
</dbReference>
<dbReference type="RefSeq" id="WP_011338764.1">
    <property type="nucleotide sequence ID" value="NC_007493.2"/>
</dbReference>
<dbReference type="RefSeq" id="YP_354257.1">
    <property type="nucleotide sequence ID" value="NC_007493.2"/>
</dbReference>
<dbReference type="SMR" id="Q3IYM8"/>
<dbReference type="STRING" id="272943.RSP_1172"/>
<dbReference type="EnsemblBacteria" id="ABA80356">
    <property type="protein sequence ID" value="ABA80356"/>
    <property type="gene ID" value="RSP_1172"/>
</dbReference>
<dbReference type="GeneID" id="3718165"/>
<dbReference type="KEGG" id="rsp:RSP_1172"/>
<dbReference type="PATRIC" id="fig|272943.9.peg.3151"/>
<dbReference type="eggNOG" id="COG0484">
    <property type="taxonomic scope" value="Bacteria"/>
</dbReference>
<dbReference type="OrthoDB" id="9779889at2"/>
<dbReference type="PhylomeDB" id="Q3IYM8"/>
<dbReference type="Proteomes" id="UP000002703">
    <property type="component" value="Chromosome 1"/>
</dbReference>
<dbReference type="GO" id="GO:0005737">
    <property type="term" value="C:cytoplasm"/>
    <property type="evidence" value="ECO:0007669"/>
    <property type="project" value="UniProtKB-SubCell"/>
</dbReference>
<dbReference type="GO" id="GO:0005524">
    <property type="term" value="F:ATP binding"/>
    <property type="evidence" value="ECO:0007669"/>
    <property type="project" value="InterPro"/>
</dbReference>
<dbReference type="GO" id="GO:0031072">
    <property type="term" value="F:heat shock protein binding"/>
    <property type="evidence" value="ECO:0007669"/>
    <property type="project" value="InterPro"/>
</dbReference>
<dbReference type="GO" id="GO:0051082">
    <property type="term" value="F:unfolded protein binding"/>
    <property type="evidence" value="ECO:0007669"/>
    <property type="project" value="UniProtKB-UniRule"/>
</dbReference>
<dbReference type="GO" id="GO:0008270">
    <property type="term" value="F:zinc ion binding"/>
    <property type="evidence" value="ECO:0007669"/>
    <property type="project" value="UniProtKB-UniRule"/>
</dbReference>
<dbReference type="GO" id="GO:0051085">
    <property type="term" value="P:chaperone cofactor-dependent protein refolding"/>
    <property type="evidence" value="ECO:0007669"/>
    <property type="project" value="TreeGrafter"/>
</dbReference>
<dbReference type="GO" id="GO:0006260">
    <property type="term" value="P:DNA replication"/>
    <property type="evidence" value="ECO:0007669"/>
    <property type="project" value="UniProtKB-KW"/>
</dbReference>
<dbReference type="GO" id="GO:0042026">
    <property type="term" value="P:protein refolding"/>
    <property type="evidence" value="ECO:0007669"/>
    <property type="project" value="TreeGrafter"/>
</dbReference>
<dbReference type="GO" id="GO:0009408">
    <property type="term" value="P:response to heat"/>
    <property type="evidence" value="ECO:0007669"/>
    <property type="project" value="InterPro"/>
</dbReference>
<dbReference type="CDD" id="cd06257">
    <property type="entry name" value="DnaJ"/>
    <property type="match status" value="1"/>
</dbReference>
<dbReference type="CDD" id="cd10747">
    <property type="entry name" value="DnaJ_C"/>
    <property type="match status" value="1"/>
</dbReference>
<dbReference type="CDD" id="cd10719">
    <property type="entry name" value="DnaJ_zf"/>
    <property type="match status" value="1"/>
</dbReference>
<dbReference type="FunFam" id="1.10.287.110:FF:000034">
    <property type="entry name" value="Chaperone protein DnaJ"/>
    <property type="match status" value="1"/>
</dbReference>
<dbReference type="FunFam" id="2.10.230.10:FF:000002">
    <property type="entry name" value="Molecular chaperone DnaJ"/>
    <property type="match status" value="1"/>
</dbReference>
<dbReference type="FunFam" id="2.60.260.20:FF:000004">
    <property type="entry name" value="Molecular chaperone DnaJ"/>
    <property type="match status" value="1"/>
</dbReference>
<dbReference type="Gene3D" id="1.10.287.110">
    <property type="entry name" value="DnaJ domain"/>
    <property type="match status" value="1"/>
</dbReference>
<dbReference type="Gene3D" id="2.10.230.10">
    <property type="entry name" value="Heat shock protein DnaJ, cysteine-rich domain"/>
    <property type="match status" value="1"/>
</dbReference>
<dbReference type="Gene3D" id="2.60.260.20">
    <property type="entry name" value="Urease metallochaperone UreE, N-terminal domain"/>
    <property type="match status" value="2"/>
</dbReference>
<dbReference type="HAMAP" id="MF_01152">
    <property type="entry name" value="DnaJ"/>
    <property type="match status" value="1"/>
</dbReference>
<dbReference type="InterPro" id="IPR012724">
    <property type="entry name" value="DnaJ"/>
</dbReference>
<dbReference type="InterPro" id="IPR002939">
    <property type="entry name" value="DnaJ_C"/>
</dbReference>
<dbReference type="InterPro" id="IPR001623">
    <property type="entry name" value="DnaJ_domain"/>
</dbReference>
<dbReference type="InterPro" id="IPR018253">
    <property type="entry name" value="DnaJ_domain_CS"/>
</dbReference>
<dbReference type="InterPro" id="IPR008971">
    <property type="entry name" value="HSP40/DnaJ_pept-bd"/>
</dbReference>
<dbReference type="InterPro" id="IPR001305">
    <property type="entry name" value="HSP_DnaJ_Cys-rich_dom"/>
</dbReference>
<dbReference type="InterPro" id="IPR036410">
    <property type="entry name" value="HSP_DnaJ_Cys-rich_dom_sf"/>
</dbReference>
<dbReference type="InterPro" id="IPR036869">
    <property type="entry name" value="J_dom_sf"/>
</dbReference>
<dbReference type="NCBIfam" id="TIGR02349">
    <property type="entry name" value="DnaJ_bact"/>
    <property type="match status" value="1"/>
</dbReference>
<dbReference type="NCBIfam" id="NF008035">
    <property type="entry name" value="PRK10767.1"/>
    <property type="match status" value="1"/>
</dbReference>
<dbReference type="PANTHER" id="PTHR43096:SF48">
    <property type="entry name" value="CHAPERONE PROTEIN DNAJ"/>
    <property type="match status" value="1"/>
</dbReference>
<dbReference type="PANTHER" id="PTHR43096">
    <property type="entry name" value="DNAJ HOMOLOG 1, MITOCHONDRIAL-RELATED"/>
    <property type="match status" value="1"/>
</dbReference>
<dbReference type="Pfam" id="PF00226">
    <property type="entry name" value="DnaJ"/>
    <property type="match status" value="1"/>
</dbReference>
<dbReference type="Pfam" id="PF01556">
    <property type="entry name" value="DnaJ_C"/>
    <property type="match status" value="1"/>
</dbReference>
<dbReference type="Pfam" id="PF00684">
    <property type="entry name" value="DnaJ_CXXCXGXG"/>
    <property type="match status" value="1"/>
</dbReference>
<dbReference type="PRINTS" id="PR00625">
    <property type="entry name" value="JDOMAIN"/>
</dbReference>
<dbReference type="SMART" id="SM00271">
    <property type="entry name" value="DnaJ"/>
    <property type="match status" value="1"/>
</dbReference>
<dbReference type="SUPFAM" id="SSF46565">
    <property type="entry name" value="Chaperone J-domain"/>
    <property type="match status" value="1"/>
</dbReference>
<dbReference type="SUPFAM" id="SSF57938">
    <property type="entry name" value="DnaJ/Hsp40 cysteine-rich domain"/>
    <property type="match status" value="1"/>
</dbReference>
<dbReference type="SUPFAM" id="SSF49493">
    <property type="entry name" value="HSP40/DnaJ peptide-binding domain"/>
    <property type="match status" value="2"/>
</dbReference>
<dbReference type="PROSITE" id="PS00636">
    <property type="entry name" value="DNAJ_1"/>
    <property type="match status" value="1"/>
</dbReference>
<dbReference type="PROSITE" id="PS50076">
    <property type="entry name" value="DNAJ_2"/>
    <property type="match status" value="1"/>
</dbReference>
<dbReference type="PROSITE" id="PS51188">
    <property type="entry name" value="ZF_CR"/>
    <property type="match status" value="1"/>
</dbReference>
<feature type="chain" id="PRO_1000085269" description="Chaperone protein DnaJ">
    <location>
        <begin position="1"/>
        <end position="382"/>
    </location>
</feature>
<feature type="domain" description="J" evidence="1">
    <location>
        <begin position="5"/>
        <end position="70"/>
    </location>
</feature>
<feature type="repeat" description="CXXCXGXG motif">
    <location>
        <begin position="154"/>
        <end position="161"/>
    </location>
</feature>
<feature type="repeat" description="CXXCXGXG motif">
    <location>
        <begin position="171"/>
        <end position="178"/>
    </location>
</feature>
<feature type="repeat" description="CXXCXGXG motif">
    <location>
        <begin position="193"/>
        <end position="200"/>
    </location>
</feature>
<feature type="repeat" description="CXXCXGXG motif">
    <location>
        <begin position="207"/>
        <end position="214"/>
    </location>
</feature>
<feature type="zinc finger region" description="CR-type" evidence="1">
    <location>
        <begin position="141"/>
        <end position="219"/>
    </location>
</feature>
<feature type="binding site" evidence="1">
    <location>
        <position position="154"/>
    </location>
    <ligand>
        <name>Zn(2+)</name>
        <dbReference type="ChEBI" id="CHEBI:29105"/>
        <label>1</label>
    </ligand>
</feature>
<feature type="binding site" evidence="1">
    <location>
        <position position="157"/>
    </location>
    <ligand>
        <name>Zn(2+)</name>
        <dbReference type="ChEBI" id="CHEBI:29105"/>
        <label>1</label>
    </ligand>
</feature>
<feature type="binding site" evidence="1">
    <location>
        <position position="171"/>
    </location>
    <ligand>
        <name>Zn(2+)</name>
        <dbReference type="ChEBI" id="CHEBI:29105"/>
        <label>2</label>
    </ligand>
</feature>
<feature type="binding site" evidence="1">
    <location>
        <position position="174"/>
    </location>
    <ligand>
        <name>Zn(2+)</name>
        <dbReference type="ChEBI" id="CHEBI:29105"/>
        <label>2</label>
    </ligand>
</feature>
<feature type="binding site" evidence="1">
    <location>
        <position position="193"/>
    </location>
    <ligand>
        <name>Zn(2+)</name>
        <dbReference type="ChEBI" id="CHEBI:29105"/>
        <label>2</label>
    </ligand>
</feature>
<feature type="binding site" evidence="1">
    <location>
        <position position="196"/>
    </location>
    <ligand>
        <name>Zn(2+)</name>
        <dbReference type="ChEBI" id="CHEBI:29105"/>
        <label>2</label>
    </ligand>
</feature>
<feature type="binding site" evidence="1">
    <location>
        <position position="207"/>
    </location>
    <ligand>
        <name>Zn(2+)</name>
        <dbReference type="ChEBI" id="CHEBI:29105"/>
        <label>1</label>
    </ligand>
</feature>
<feature type="binding site" evidence="1">
    <location>
        <position position="210"/>
    </location>
    <ligand>
        <name>Zn(2+)</name>
        <dbReference type="ChEBI" id="CHEBI:29105"/>
        <label>1</label>
    </ligand>
</feature>
<sequence length="382" mass="40739">MAKRDYYEVLGVSRTASADELKKAYRTKAKELHPDRNADNPQAEAQFKEVNEAYDVLRDADKKAAYDRYGHAAFEGGMGGGARAGGGYGQQGDFASAFSDVFEDLFGDFMGGRGGAPRSRAQRGSDLRYNLRVTLDEAYRGVQKTINVPASVACDACKGTGAEGGAEAVTCPTCSGMGKVRAQQGFFTVERTCPTCNGMGQIVKNPCKVCHGAGRVEKERSLSVNIPAGVETGTRIRLAGEGEAGMRGGPSGDLYIFIEVREHALFQRDGVHLFCRVPVSIAAAALGGEVEVPTIDGGSSRVKIPAGSQTGKQMRLRGKGMPALRGGGAGDMLIELAVETPVNLTARQKELLREFEKLSEDNNPEGKSFFSKVKGFWDGMTG</sequence>
<keyword id="KW-0143">Chaperone</keyword>
<keyword id="KW-0963">Cytoplasm</keyword>
<keyword id="KW-0235">DNA replication</keyword>
<keyword id="KW-0479">Metal-binding</keyword>
<keyword id="KW-1185">Reference proteome</keyword>
<keyword id="KW-0677">Repeat</keyword>
<keyword id="KW-0346">Stress response</keyword>
<keyword id="KW-0862">Zinc</keyword>
<keyword id="KW-0863">Zinc-finger</keyword>
<protein>
    <recommendedName>
        <fullName evidence="1">Chaperone protein DnaJ</fullName>
    </recommendedName>
</protein>
<reference key="1">
    <citation type="submission" date="2005-09" db="EMBL/GenBank/DDBJ databases">
        <title>Complete sequence of chromosome 1 of Rhodobacter sphaeroides 2.4.1.</title>
        <authorList>
            <person name="Copeland A."/>
            <person name="Lucas S."/>
            <person name="Lapidus A."/>
            <person name="Barry K."/>
            <person name="Detter J.C."/>
            <person name="Glavina T."/>
            <person name="Hammon N."/>
            <person name="Israni S."/>
            <person name="Pitluck S."/>
            <person name="Richardson P."/>
            <person name="Mackenzie C."/>
            <person name="Choudhary M."/>
            <person name="Larimer F."/>
            <person name="Hauser L.J."/>
            <person name="Land M."/>
            <person name="Donohue T.J."/>
            <person name="Kaplan S."/>
        </authorList>
    </citation>
    <scope>NUCLEOTIDE SEQUENCE [LARGE SCALE GENOMIC DNA]</scope>
    <source>
        <strain>ATCC 17023 / DSM 158 / JCM 6121 / CCUG 31486 / LMG 2827 / NBRC 12203 / NCIMB 8253 / ATH 2.4.1.</strain>
    </source>
</reference>
<organism>
    <name type="scientific">Cereibacter sphaeroides (strain ATCC 17023 / DSM 158 / JCM 6121 / CCUG 31486 / LMG 2827 / NBRC 12203 / NCIMB 8253 / ATH 2.4.1.)</name>
    <name type="common">Rhodobacter sphaeroides</name>
    <dbReference type="NCBI Taxonomy" id="272943"/>
    <lineage>
        <taxon>Bacteria</taxon>
        <taxon>Pseudomonadati</taxon>
        <taxon>Pseudomonadota</taxon>
        <taxon>Alphaproteobacteria</taxon>
        <taxon>Rhodobacterales</taxon>
        <taxon>Paracoccaceae</taxon>
        <taxon>Cereibacter</taxon>
    </lineage>
</organism>
<gene>
    <name evidence="1" type="primary">dnaJ</name>
    <name type="ordered locus">RHOS4_27880</name>
    <name type="ORF">RSP_1172</name>
</gene>
<name>DNAJ_CERS4</name>
<evidence type="ECO:0000255" key="1">
    <source>
        <dbReference type="HAMAP-Rule" id="MF_01152"/>
    </source>
</evidence>
<comment type="function">
    <text evidence="1">Participates actively in the response to hyperosmotic and heat shock by preventing the aggregation of stress-denatured proteins and by disaggregating proteins, also in an autonomous, DnaK-independent fashion. Unfolded proteins bind initially to DnaJ; upon interaction with the DnaJ-bound protein, DnaK hydrolyzes its bound ATP, resulting in the formation of a stable complex. GrpE releases ADP from DnaK; ATP binding to DnaK triggers the release of the substrate protein, thus completing the reaction cycle. Several rounds of ATP-dependent interactions between DnaJ, DnaK and GrpE are required for fully efficient folding. Also involved, together with DnaK and GrpE, in the DNA replication of plasmids through activation of initiation proteins.</text>
</comment>
<comment type="cofactor">
    <cofactor evidence="1">
        <name>Zn(2+)</name>
        <dbReference type="ChEBI" id="CHEBI:29105"/>
    </cofactor>
    <text evidence="1">Binds 2 Zn(2+) ions per monomer.</text>
</comment>
<comment type="subunit">
    <text evidence="1">Homodimer.</text>
</comment>
<comment type="subcellular location">
    <subcellularLocation>
        <location evidence="1">Cytoplasm</location>
    </subcellularLocation>
</comment>
<comment type="domain">
    <text evidence="1">The J domain is necessary and sufficient to stimulate DnaK ATPase activity. Zinc center 1 plays an important role in the autonomous, DnaK-independent chaperone activity of DnaJ. Zinc center 2 is essential for interaction with DnaK and for DnaJ activity.</text>
</comment>
<comment type="similarity">
    <text evidence="1">Belongs to the DnaJ family.</text>
</comment>
<accession>Q3IYM8</accession>
<proteinExistence type="inferred from homology"/>